<dbReference type="EC" id="4.1.1.15" evidence="2"/>
<dbReference type="EMBL" id="M18629">
    <property type="protein sequence ID" value="AAA51430.1"/>
    <property type="molecule type" value="mRNA"/>
</dbReference>
<dbReference type="PIR" id="A46758">
    <property type="entry name" value="A46758"/>
</dbReference>
<dbReference type="RefSeq" id="NP_001009225.1">
    <property type="nucleotide sequence ID" value="NM_001009225.1"/>
</dbReference>
<dbReference type="RefSeq" id="XP_019691505.2">
    <property type="nucleotide sequence ID" value="XM_019835946.3"/>
</dbReference>
<dbReference type="RefSeq" id="XP_019691506.2">
    <property type="nucleotide sequence ID" value="XM_019835947.3"/>
</dbReference>
<dbReference type="SMR" id="P14748"/>
<dbReference type="FunCoup" id="P14748">
    <property type="interactions" value="12"/>
</dbReference>
<dbReference type="STRING" id="9685.ENSFCAP00000057074"/>
<dbReference type="PaxDb" id="9685-ENSFCAP00000006586"/>
<dbReference type="Ensembl" id="ENSFCAT00000044700.3">
    <property type="protein sequence ID" value="ENSFCAP00000030985.2"/>
    <property type="gene ID" value="ENSFCAG00000007099.6"/>
</dbReference>
<dbReference type="GeneID" id="493699"/>
<dbReference type="KEGG" id="fca:493699"/>
<dbReference type="CTD" id="2571"/>
<dbReference type="VGNC" id="VGNC:62430">
    <property type="gene designation" value="GAD1"/>
</dbReference>
<dbReference type="eggNOG" id="KOG0629">
    <property type="taxonomic scope" value="Eukaryota"/>
</dbReference>
<dbReference type="GeneTree" id="ENSGT00940000155526"/>
<dbReference type="InParanoid" id="P14748"/>
<dbReference type="OrthoDB" id="392571at2759"/>
<dbReference type="Proteomes" id="UP000011712">
    <property type="component" value="Chromosome C1"/>
</dbReference>
<dbReference type="Bgee" id="ENSFCAG00000007099">
    <property type="expression patterns" value="Expressed in prefrontal cortex and 7 other cell types or tissues"/>
</dbReference>
<dbReference type="GO" id="GO:0005737">
    <property type="term" value="C:cytoplasm"/>
    <property type="evidence" value="ECO:0000318"/>
    <property type="project" value="GO_Central"/>
</dbReference>
<dbReference type="GO" id="GO:0048786">
    <property type="term" value="C:presynaptic active zone"/>
    <property type="evidence" value="ECO:0000318"/>
    <property type="project" value="GO_Central"/>
</dbReference>
<dbReference type="GO" id="GO:0004351">
    <property type="term" value="F:glutamate decarboxylase activity"/>
    <property type="evidence" value="ECO:0000250"/>
    <property type="project" value="UniProtKB"/>
</dbReference>
<dbReference type="GO" id="GO:0042802">
    <property type="term" value="F:identical protein binding"/>
    <property type="evidence" value="ECO:0000250"/>
    <property type="project" value="UniProtKB"/>
</dbReference>
<dbReference type="GO" id="GO:0030170">
    <property type="term" value="F:pyridoxal phosphate binding"/>
    <property type="evidence" value="ECO:0007669"/>
    <property type="project" value="InterPro"/>
</dbReference>
<dbReference type="GO" id="GO:0009449">
    <property type="term" value="P:gamma-aminobutyric acid biosynthetic process"/>
    <property type="evidence" value="ECO:0000250"/>
    <property type="project" value="UniProtKB"/>
</dbReference>
<dbReference type="GO" id="GO:0006538">
    <property type="term" value="P:glutamate catabolic process"/>
    <property type="evidence" value="ECO:0000250"/>
    <property type="project" value="UniProtKB"/>
</dbReference>
<dbReference type="CDD" id="cd06450">
    <property type="entry name" value="DOPA_deC_like"/>
    <property type="match status" value="1"/>
</dbReference>
<dbReference type="FunFam" id="3.90.1150.170:FF:000003">
    <property type="entry name" value="Glutamate decarboxylase 1"/>
    <property type="match status" value="1"/>
</dbReference>
<dbReference type="FunFam" id="3.40.640.10:FF:000016">
    <property type="entry name" value="Glutamate decarboxylase like 1"/>
    <property type="match status" value="1"/>
</dbReference>
<dbReference type="Gene3D" id="3.90.1150.170">
    <property type="match status" value="1"/>
</dbReference>
<dbReference type="Gene3D" id="3.40.640.10">
    <property type="entry name" value="Type I PLP-dependent aspartate aminotransferase-like (Major domain)"/>
    <property type="match status" value="1"/>
</dbReference>
<dbReference type="InterPro" id="IPR002129">
    <property type="entry name" value="PyrdxlP-dep_de-COase"/>
</dbReference>
<dbReference type="InterPro" id="IPR015424">
    <property type="entry name" value="PyrdxlP-dep_Trfase"/>
</dbReference>
<dbReference type="InterPro" id="IPR015421">
    <property type="entry name" value="PyrdxlP-dep_Trfase_major"/>
</dbReference>
<dbReference type="InterPro" id="IPR021115">
    <property type="entry name" value="Pyridoxal-P_BS"/>
</dbReference>
<dbReference type="PANTHER" id="PTHR45677:SF5">
    <property type="entry name" value="GLUTAMATE DECARBOXYLASE 1"/>
    <property type="match status" value="1"/>
</dbReference>
<dbReference type="PANTHER" id="PTHR45677">
    <property type="entry name" value="GLUTAMATE DECARBOXYLASE-RELATED"/>
    <property type="match status" value="1"/>
</dbReference>
<dbReference type="Pfam" id="PF00282">
    <property type="entry name" value="Pyridoxal_deC"/>
    <property type="match status" value="1"/>
</dbReference>
<dbReference type="SUPFAM" id="SSF53383">
    <property type="entry name" value="PLP-dependent transferases"/>
    <property type="match status" value="1"/>
</dbReference>
<dbReference type="PROSITE" id="PS00392">
    <property type="entry name" value="DDC_GAD_HDC_YDC"/>
    <property type="match status" value="1"/>
</dbReference>
<reference key="1">
    <citation type="journal article" date="1987" name="J. Neurosci.">
        <title>Glutamic acid decarboxylase cDNA: nucleotide sequence encoding an enzymatically active fusion protein.</title>
        <authorList>
            <person name="Kobayashi Y."/>
            <person name="Kaufman D.L."/>
            <person name="Tobin A.J."/>
        </authorList>
    </citation>
    <scope>NUCLEOTIDE SEQUENCE [MRNA]</scope>
    <source>
        <tissue>Occipital cortex</tissue>
    </source>
</reference>
<evidence type="ECO:0000250" key="1">
    <source>
        <dbReference type="UniProtKB" id="P48318"/>
    </source>
</evidence>
<evidence type="ECO:0000250" key="2">
    <source>
        <dbReference type="UniProtKB" id="Q99259"/>
    </source>
</evidence>
<evidence type="ECO:0000256" key="3">
    <source>
        <dbReference type="SAM" id="MobiDB-lite"/>
    </source>
</evidence>
<evidence type="ECO:0000305" key="4"/>
<protein>
    <recommendedName>
        <fullName>Glutamate decarboxylase 1</fullName>
        <ecNumber evidence="2">4.1.1.15</ecNumber>
    </recommendedName>
    <alternativeName>
        <fullName>67 kDa glutamic acid decarboxylase</fullName>
        <shortName>GAD-67</shortName>
    </alternativeName>
    <alternativeName>
        <fullName>Glutamate decarboxylase 67 kDa isoform</fullName>
    </alternativeName>
</protein>
<comment type="function">
    <text evidence="2">Catalyzes the synthesis of the inhibitory neurotransmitter gamma-aminobutyric acid (GABA) with pyridoxal 5'-phosphate as cofactor.</text>
</comment>
<comment type="catalytic activity">
    <reaction evidence="2">
        <text>L-glutamate + H(+) = 4-aminobutanoate + CO2</text>
        <dbReference type="Rhea" id="RHEA:17785"/>
        <dbReference type="ChEBI" id="CHEBI:15378"/>
        <dbReference type="ChEBI" id="CHEBI:16526"/>
        <dbReference type="ChEBI" id="CHEBI:29985"/>
        <dbReference type="ChEBI" id="CHEBI:59888"/>
        <dbReference type="EC" id="4.1.1.15"/>
    </reaction>
    <physiologicalReaction direction="left-to-right" evidence="2">
        <dbReference type="Rhea" id="RHEA:17786"/>
    </physiologicalReaction>
</comment>
<comment type="cofactor">
    <cofactor evidence="2">
        <name>pyridoxal 5'-phosphate</name>
        <dbReference type="ChEBI" id="CHEBI:597326"/>
    </cofactor>
</comment>
<comment type="subunit">
    <text evidence="2">Homodimer.</text>
</comment>
<comment type="similarity">
    <text evidence="4">Belongs to the group II decarboxylase family.</text>
</comment>
<proteinExistence type="evidence at transcript level"/>
<keyword id="KW-0210">Decarboxylase</keyword>
<keyword id="KW-0456">Lyase</keyword>
<keyword id="KW-0530">Neurotransmitter biosynthesis</keyword>
<keyword id="KW-0597">Phosphoprotein</keyword>
<keyword id="KW-0663">Pyridoxal phosphate</keyword>
<keyword id="KW-1185">Reference proteome</keyword>
<organism>
    <name type="scientific">Felis catus</name>
    <name type="common">Cat</name>
    <name type="synonym">Felis silvestris catus</name>
    <dbReference type="NCBI Taxonomy" id="9685"/>
    <lineage>
        <taxon>Eukaryota</taxon>
        <taxon>Metazoa</taxon>
        <taxon>Chordata</taxon>
        <taxon>Craniata</taxon>
        <taxon>Vertebrata</taxon>
        <taxon>Euteleostomi</taxon>
        <taxon>Mammalia</taxon>
        <taxon>Eutheria</taxon>
        <taxon>Laurasiatheria</taxon>
        <taxon>Carnivora</taxon>
        <taxon>Feliformia</taxon>
        <taxon>Felidae</taxon>
        <taxon>Felinae</taxon>
        <taxon>Felis</taxon>
    </lineage>
</organism>
<accession>P14748</accession>
<name>DCE1_FELCA</name>
<gene>
    <name type="primary">GAD1</name>
    <name type="synonym">GAD67</name>
</gene>
<feature type="chain" id="PRO_0000146962" description="Glutamate decarboxylase 1">
    <location>
        <begin position="1"/>
        <end position="594"/>
    </location>
</feature>
<feature type="region of interest" description="Disordered" evidence="3">
    <location>
        <begin position="1"/>
        <end position="23"/>
    </location>
</feature>
<feature type="compositionally biased region" description="Low complexity" evidence="3">
    <location>
        <begin position="1"/>
        <end position="13"/>
    </location>
</feature>
<feature type="binding site" evidence="2">
    <location>
        <begin position="190"/>
        <end position="192"/>
    </location>
    <ligand>
        <name>4-aminobutanoate</name>
        <dbReference type="ChEBI" id="CHEBI:59888"/>
    </ligand>
</feature>
<feature type="binding site" evidence="2">
    <location>
        <position position="567"/>
    </location>
    <ligand>
        <name>4-aminobutanoate</name>
        <dbReference type="ChEBI" id="CHEBI:59888"/>
    </ligand>
</feature>
<feature type="modified residue" description="Phosphoserine" evidence="1">
    <location>
        <position position="78"/>
    </location>
</feature>
<feature type="modified residue" description="N6-(pyridoxal phosphate)lysine" evidence="2">
    <location>
        <position position="405"/>
    </location>
</feature>
<sequence length="594" mass="66825">MASSTPSSSATSSNAGADPNTTNLRPTTYDTWCGVAHGCTRKLGLKICGFLQRTNSLEEKSRLVSAFKERQSSKNLLSCENSDRDGRFRRTETDFSNLFARDLLPAKNGEEQTVQFLLEVVDILLNYVRKTFDRSTKVLDFHHPHQLLEGMEGFNLELSDHPESLEQILVDCRDTLKYGVRTGHPRFFNQLSTGLDIIGLAGEWLTSTANTNMFTYEIAPVFVLMEQITLKKMREIVGWSSKDGDGIFSPGGAISNMYSIMAARYKFFPEVKTKGMAAVPKLVLFTSEHSHYSIKKAGAALGFGTDNVILIKCNERGKIIPADLEAKILEAKQKGYVPLYVNATAGTTVYGAFDPIQEIADICEKYNLWLHVDAAWGGGLLMSRKHRHKLSGIERANSVTWNPHKMMGVLLQCSAILVKEKGILQGCNQMCAGYLFQPDKQYDVSYDTGDKAIQCGRHVDIFKFWLMWKAKGTVGFENQINKCLELAEYLYAKIKNREEFEMVFDGEPEHTNVCFWYIPQSLRGIPDSPERREKLHRVAPKIKALMMESGTTMVGYQPQGDKANFFRMVISNPAATQSDIDFLIEEIERLGQDL</sequence>